<comment type="function">
    <text evidence="1">Binds together with bS18 to 16S ribosomal RNA.</text>
</comment>
<comment type="similarity">
    <text evidence="1">Belongs to the bacterial ribosomal protein bS6 family.</text>
</comment>
<reference key="1">
    <citation type="submission" date="2006-04" db="EMBL/GenBank/DDBJ databases">
        <title>Complete sequence of chromosome of Deinococcus geothermalis DSM 11300.</title>
        <authorList>
            <person name="Copeland A."/>
            <person name="Lucas S."/>
            <person name="Lapidus A."/>
            <person name="Barry K."/>
            <person name="Detter J.C."/>
            <person name="Glavina del Rio T."/>
            <person name="Hammon N."/>
            <person name="Israni S."/>
            <person name="Dalin E."/>
            <person name="Tice H."/>
            <person name="Pitluck S."/>
            <person name="Brettin T."/>
            <person name="Bruce D."/>
            <person name="Han C."/>
            <person name="Tapia R."/>
            <person name="Saunders E."/>
            <person name="Gilna P."/>
            <person name="Schmutz J."/>
            <person name="Larimer F."/>
            <person name="Land M."/>
            <person name="Hauser L."/>
            <person name="Kyrpides N."/>
            <person name="Kim E."/>
            <person name="Daly M.J."/>
            <person name="Fredrickson J.K."/>
            <person name="Makarova K.S."/>
            <person name="Gaidamakova E.K."/>
            <person name="Zhai M."/>
            <person name="Richardson P."/>
        </authorList>
    </citation>
    <scope>NUCLEOTIDE SEQUENCE [LARGE SCALE GENOMIC DNA]</scope>
    <source>
        <strain>DSM 11300 / CIP 105573 / AG-3a</strain>
    </source>
</reference>
<accession>Q1J215</accession>
<keyword id="KW-0687">Ribonucleoprotein</keyword>
<keyword id="KW-0689">Ribosomal protein</keyword>
<keyword id="KW-0694">RNA-binding</keyword>
<keyword id="KW-0699">rRNA-binding</keyword>
<gene>
    <name evidence="1" type="primary">rpsF</name>
    <name type="ordered locus">Dgeo_0166</name>
</gene>
<dbReference type="EMBL" id="CP000359">
    <property type="protein sequence ID" value="ABF44469.1"/>
    <property type="molecule type" value="Genomic_DNA"/>
</dbReference>
<dbReference type="RefSeq" id="WP_011529316.1">
    <property type="nucleotide sequence ID" value="NC_008025.1"/>
</dbReference>
<dbReference type="SMR" id="Q1J215"/>
<dbReference type="STRING" id="319795.Dgeo_0166"/>
<dbReference type="KEGG" id="dge:Dgeo_0166"/>
<dbReference type="eggNOG" id="COG0360">
    <property type="taxonomic scope" value="Bacteria"/>
</dbReference>
<dbReference type="HOGENOM" id="CLU_113441_5_3_0"/>
<dbReference type="Proteomes" id="UP000002431">
    <property type="component" value="Chromosome"/>
</dbReference>
<dbReference type="GO" id="GO:0005737">
    <property type="term" value="C:cytoplasm"/>
    <property type="evidence" value="ECO:0007669"/>
    <property type="project" value="UniProtKB-ARBA"/>
</dbReference>
<dbReference type="GO" id="GO:1990904">
    <property type="term" value="C:ribonucleoprotein complex"/>
    <property type="evidence" value="ECO:0007669"/>
    <property type="project" value="UniProtKB-KW"/>
</dbReference>
<dbReference type="GO" id="GO:0005840">
    <property type="term" value="C:ribosome"/>
    <property type="evidence" value="ECO:0007669"/>
    <property type="project" value="UniProtKB-KW"/>
</dbReference>
<dbReference type="GO" id="GO:0070181">
    <property type="term" value="F:small ribosomal subunit rRNA binding"/>
    <property type="evidence" value="ECO:0007669"/>
    <property type="project" value="TreeGrafter"/>
</dbReference>
<dbReference type="GO" id="GO:0003735">
    <property type="term" value="F:structural constituent of ribosome"/>
    <property type="evidence" value="ECO:0007669"/>
    <property type="project" value="InterPro"/>
</dbReference>
<dbReference type="GO" id="GO:0006412">
    <property type="term" value="P:translation"/>
    <property type="evidence" value="ECO:0007669"/>
    <property type="project" value="UniProtKB-UniRule"/>
</dbReference>
<dbReference type="CDD" id="cd00473">
    <property type="entry name" value="bS6"/>
    <property type="match status" value="1"/>
</dbReference>
<dbReference type="Gene3D" id="3.30.70.60">
    <property type="match status" value="1"/>
</dbReference>
<dbReference type="HAMAP" id="MF_00360">
    <property type="entry name" value="Ribosomal_bS6"/>
    <property type="match status" value="1"/>
</dbReference>
<dbReference type="InterPro" id="IPR000529">
    <property type="entry name" value="Ribosomal_bS6"/>
</dbReference>
<dbReference type="InterPro" id="IPR035980">
    <property type="entry name" value="Ribosomal_bS6_sf"/>
</dbReference>
<dbReference type="InterPro" id="IPR020814">
    <property type="entry name" value="Ribosomal_S6_plastid/chlpt"/>
</dbReference>
<dbReference type="InterPro" id="IPR014717">
    <property type="entry name" value="Transl_elong_EF1B/ribsomal_bS6"/>
</dbReference>
<dbReference type="NCBIfam" id="TIGR00166">
    <property type="entry name" value="S6"/>
    <property type="match status" value="1"/>
</dbReference>
<dbReference type="PANTHER" id="PTHR21011">
    <property type="entry name" value="MITOCHONDRIAL 28S RIBOSOMAL PROTEIN S6"/>
    <property type="match status" value="1"/>
</dbReference>
<dbReference type="PANTHER" id="PTHR21011:SF1">
    <property type="entry name" value="SMALL RIBOSOMAL SUBUNIT PROTEIN BS6M"/>
    <property type="match status" value="1"/>
</dbReference>
<dbReference type="Pfam" id="PF01250">
    <property type="entry name" value="Ribosomal_S6"/>
    <property type="match status" value="1"/>
</dbReference>
<dbReference type="SUPFAM" id="SSF54995">
    <property type="entry name" value="Ribosomal protein S6"/>
    <property type="match status" value="1"/>
</dbReference>
<evidence type="ECO:0000255" key="1">
    <source>
        <dbReference type="HAMAP-Rule" id="MF_00360"/>
    </source>
</evidence>
<evidence type="ECO:0000305" key="2"/>
<organism>
    <name type="scientific">Deinococcus geothermalis (strain DSM 11300 / CIP 105573 / AG-3a)</name>
    <dbReference type="NCBI Taxonomy" id="319795"/>
    <lineage>
        <taxon>Bacteria</taxon>
        <taxon>Thermotogati</taxon>
        <taxon>Deinococcota</taxon>
        <taxon>Deinococci</taxon>
        <taxon>Deinococcales</taxon>
        <taxon>Deinococcaceae</taxon>
        <taxon>Deinococcus</taxon>
    </lineage>
</organism>
<protein>
    <recommendedName>
        <fullName evidence="1">Small ribosomal subunit protein bS6</fullName>
    </recommendedName>
    <alternativeName>
        <fullName evidence="2">30S ribosomal protein S6</fullName>
    </alternativeName>
</protein>
<sequence length="102" mass="11871">MNQYDLNLILNPNLSAEQLQIEKDYIETTLRNNGAEVTKLDDVGNRRMAYPIAKDREGYYLMYTIRAGGNPEKDIASTLRLRDNVRRVLVVKDRPEWKTKKA</sequence>
<proteinExistence type="inferred from homology"/>
<feature type="chain" id="PRO_1000005254" description="Small ribosomal subunit protein bS6">
    <location>
        <begin position="1"/>
        <end position="102"/>
    </location>
</feature>
<name>RS6_DEIGD</name>